<organism>
    <name type="scientific">Pasteurella multocida (strain Pm70)</name>
    <dbReference type="NCBI Taxonomy" id="272843"/>
    <lineage>
        <taxon>Bacteria</taxon>
        <taxon>Pseudomonadati</taxon>
        <taxon>Pseudomonadota</taxon>
        <taxon>Gammaproteobacteria</taxon>
        <taxon>Pasteurellales</taxon>
        <taxon>Pasteurellaceae</taxon>
        <taxon>Pasteurella</taxon>
    </lineage>
</organism>
<feature type="chain" id="PRO_0000196438" description="DNA replication and repair protein RecF">
    <location>
        <begin position="1"/>
        <end position="358"/>
    </location>
</feature>
<feature type="binding site" evidence="2">
    <location>
        <begin position="30"/>
        <end position="37"/>
    </location>
    <ligand>
        <name>ATP</name>
        <dbReference type="ChEBI" id="CHEBI:30616"/>
    </ligand>
</feature>
<keyword id="KW-0067">ATP-binding</keyword>
<keyword id="KW-0963">Cytoplasm</keyword>
<keyword id="KW-0227">DNA damage</keyword>
<keyword id="KW-0234">DNA repair</keyword>
<keyword id="KW-0235">DNA replication</keyword>
<keyword id="KW-0238">DNA-binding</keyword>
<keyword id="KW-0547">Nucleotide-binding</keyword>
<keyword id="KW-1185">Reference proteome</keyword>
<keyword id="KW-0742">SOS response</keyword>
<protein>
    <recommendedName>
        <fullName>DNA replication and repair protein RecF</fullName>
    </recommendedName>
</protein>
<gene>
    <name type="primary">recF</name>
    <name type="ordered locus">PM1159</name>
</gene>
<dbReference type="EMBL" id="AE004439">
    <property type="protein sequence ID" value="AAK03243.1"/>
    <property type="molecule type" value="Genomic_DNA"/>
</dbReference>
<dbReference type="RefSeq" id="WP_005751857.1">
    <property type="nucleotide sequence ID" value="NC_002663.1"/>
</dbReference>
<dbReference type="SMR" id="Q9CLQ6"/>
<dbReference type="STRING" id="272843.PM1159"/>
<dbReference type="EnsemblBacteria" id="AAK03243">
    <property type="protein sequence ID" value="AAK03243"/>
    <property type="gene ID" value="PM1159"/>
</dbReference>
<dbReference type="GeneID" id="77206475"/>
<dbReference type="KEGG" id="pmu:PM1159"/>
<dbReference type="PATRIC" id="fig|272843.6.peg.1170"/>
<dbReference type="HOGENOM" id="CLU_040267_0_0_6"/>
<dbReference type="OrthoDB" id="9803889at2"/>
<dbReference type="Proteomes" id="UP000000809">
    <property type="component" value="Chromosome"/>
</dbReference>
<dbReference type="GO" id="GO:0005737">
    <property type="term" value="C:cytoplasm"/>
    <property type="evidence" value="ECO:0007669"/>
    <property type="project" value="UniProtKB-SubCell"/>
</dbReference>
<dbReference type="GO" id="GO:0005524">
    <property type="term" value="F:ATP binding"/>
    <property type="evidence" value="ECO:0007669"/>
    <property type="project" value="UniProtKB-UniRule"/>
</dbReference>
<dbReference type="GO" id="GO:0003697">
    <property type="term" value="F:single-stranded DNA binding"/>
    <property type="evidence" value="ECO:0007669"/>
    <property type="project" value="UniProtKB-UniRule"/>
</dbReference>
<dbReference type="GO" id="GO:0006260">
    <property type="term" value="P:DNA replication"/>
    <property type="evidence" value="ECO:0007669"/>
    <property type="project" value="UniProtKB-UniRule"/>
</dbReference>
<dbReference type="GO" id="GO:0000731">
    <property type="term" value="P:DNA synthesis involved in DNA repair"/>
    <property type="evidence" value="ECO:0007669"/>
    <property type="project" value="TreeGrafter"/>
</dbReference>
<dbReference type="GO" id="GO:0006302">
    <property type="term" value="P:double-strand break repair"/>
    <property type="evidence" value="ECO:0007669"/>
    <property type="project" value="TreeGrafter"/>
</dbReference>
<dbReference type="GO" id="GO:0009432">
    <property type="term" value="P:SOS response"/>
    <property type="evidence" value="ECO:0007669"/>
    <property type="project" value="UniProtKB-UniRule"/>
</dbReference>
<dbReference type="FunFam" id="1.20.1050.90:FF:000001">
    <property type="entry name" value="DNA replication and repair protein RecF"/>
    <property type="match status" value="1"/>
</dbReference>
<dbReference type="Gene3D" id="3.40.50.300">
    <property type="entry name" value="P-loop containing nucleotide triphosphate hydrolases"/>
    <property type="match status" value="1"/>
</dbReference>
<dbReference type="Gene3D" id="1.20.1050.90">
    <property type="entry name" value="RecF/RecN/SMC, N-terminal domain"/>
    <property type="match status" value="1"/>
</dbReference>
<dbReference type="HAMAP" id="MF_00365">
    <property type="entry name" value="RecF"/>
    <property type="match status" value="1"/>
</dbReference>
<dbReference type="InterPro" id="IPR001238">
    <property type="entry name" value="DNA-binding_RecF"/>
</dbReference>
<dbReference type="InterPro" id="IPR018078">
    <property type="entry name" value="DNA-binding_RecF_CS"/>
</dbReference>
<dbReference type="InterPro" id="IPR027417">
    <property type="entry name" value="P-loop_NTPase"/>
</dbReference>
<dbReference type="InterPro" id="IPR003395">
    <property type="entry name" value="RecF/RecN/SMC_N"/>
</dbReference>
<dbReference type="InterPro" id="IPR042174">
    <property type="entry name" value="RecF_2"/>
</dbReference>
<dbReference type="NCBIfam" id="TIGR00611">
    <property type="entry name" value="recf"/>
    <property type="match status" value="1"/>
</dbReference>
<dbReference type="PANTHER" id="PTHR32182">
    <property type="entry name" value="DNA REPLICATION AND REPAIR PROTEIN RECF"/>
    <property type="match status" value="1"/>
</dbReference>
<dbReference type="PANTHER" id="PTHR32182:SF0">
    <property type="entry name" value="DNA REPLICATION AND REPAIR PROTEIN RECF"/>
    <property type="match status" value="1"/>
</dbReference>
<dbReference type="Pfam" id="PF02463">
    <property type="entry name" value="SMC_N"/>
    <property type="match status" value="1"/>
</dbReference>
<dbReference type="SUPFAM" id="SSF52540">
    <property type="entry name" value="P-loop containing nucleoside triphosphate hydrolases"/>
    <property type="match status" value="1"/>
</dbReference>
<dbReference type="PROSITE" id="PS00617">
    <property type="entry name" value="RECF_1"/>
    <property type="match status" value="1"/>
</dbReference>
<dbReference type="PROSITE" id="PS00618">
    <property type="entry name" value="RECF_2"/>
    <property type="match status" value="1"/>
</dbReference>
<reference key="1">
    <citation type="journal article" date="2001" name="Proc. Natl. Acad. Sci. U.S.A.">
        <title>Complete genomic sequence of Pasteurella multocida Pm70.</title>
        <authorList>
            <person name="May B.J."/>
            <person name="Zhang Q."/>
            <person name="Li L.L."/>
            <person name="Paustian M.L."/>
            <person name="Whittam T.S."/>
            <person name="Kapur V."/>
        </authorList>
    </citation>
    <scope>NUCLEOTIDE SEQUENCE [LARGE SCALE GENOMIC DNA]</scope>
    <source>
        <strain>Pm70</strain>
    </source>
</reference>
<evidence type="ECO:0000250" key="1"/>
<evidence type="ECO:0000255" key="2"/>
<evidence type="ECO:0000305" key="3"/>
<comment type="function">
    <text evidence="1">The RecF protein is involved in DNA metabolism; it is required for DNA replication and normal SOS inducibility. RecF binds preferentially to single-stranded, linear DNA. It also seems to bind ATP (By similarity).</text>
</comment>
<comment type="subcellular location">
    <subcellularLocation>
        <location evidence="1">Cytoplasm</location>
    </subcellularLocation>
</comment>
<comment type="similarity">
    <text evidence="3">Belongs to the RecF family.</text>
</comment>
<accession>Q9CLQ6</accession>
<proteinExistence type="inferred from homology"/>
<name>RECF_PASMU</name>
<sequence length="358" mass="41146">MAISRLLIENFRNLTAVDLEFDHGFNFLVGNNGSGKTSLLEAIFYLGHGRSFKSAVSNRIISYEQPHFILHAKIQEQAHQWSVGLQKLRQGNSVVKINGEDGNKIADLAHLLPMQLITPEGLTLLNGGPVYRRAFLDWGLFHHHNHFHLAWVNLNRLLKQRNAALQQATHYQALEIWDRELVKLAHQVSEWRAQYAEALRPEIEQTCRLFLPELEISVSFHQGWEKDSDYADLLVRHFERDRAIGYTVSGPQKADFRFKANGLPVEDVLSRGQLKLLMCALRLAQGEHLMKQKERHCIFLIDDFASELDQYKRALLAERLKQSGSQVFVSAITETQLKQMQPQQHRTFRVEEGCIAPL</sequence>